<comment type="function">
    <text evidence="1">Removes 5-oxoproline from various penultimate amino acid residues except L-proline.</text>
</comment>
<comment type="catalytic activity">
    <reaction evidence="1">
        <text>Release of an N-terminal pyroglutamyl group from a polypeptide, the second amino acid generally not being Pro.</text>
        <dbReference type="EC" id="3.4.19.3"/>
    </reaction>
</comment>
<comment type="subunit">
    <text evidence="1">Homotetramer.</text>
</comment>
<comment type="subcellular location">
    <subcellularLocation>
        <location evidence="1">Cytoplasm</location>
    </subcellularLocation>
</comment>
<comment type="similarity">
    <text evidence="1">Belongs to the peptidase C15 family.</text>
</comment>
<name>PCP_THEPX</name>
<evidence type="ECO:0000255" key="1">
    <source>
        <dbReference type="HAMAP-Rule" id="MF_00417"/>
    </source>
</evidence>
<accession>B0K0D9</accession>
<gene>
    <name evidence="1" type="primary">pcp</name>
    <name type="ordered locus">Teth514_1374</name>
</gene>
<reference key="1">
    <citation type="submission" date="2008-01" db="EMBL/GenBank/DDBJ databases">
        <title>Complete sequence of Thermoanaerobacter sp. X514.</title>
        <authorList>
            <consortium name="US DOE Joint Genome Institute"/>
            <person name="Copeland A."/>
            <person name="Lucas S."/>
            <person name="Lapidus A."/>
            <person name="Barry K."/>
            <person name="Glavina del Rio T."/>
            <person name="Dalin E."/>
            <person name="Tice H."/>
            <person name="Pitluck S."/>
            <person name="Bruce D."/>
            <person name="Goodwin L."/>
            <person name="Saunders E."/>
            <person name="Brettin T."/>
            <person name="Detter J.C."/>
            <person name="Han C."/>
            <person name="Schmutz J."/>
            <person name="Larimer F."/>
            <person name="Land M."/>
            <person name="Hauser L."/>
            <person name="Kyrpides N."/>
            <person name="Kim E."/>
            <person name="Hemme C."/>
            <person name="Fields M.W."/>
            <person name="He Z."/>
            <person name="Zhou J."/>
            <person name="Richardson P."/>
        </authorList>
    </citation>
    <scope>NUCLEOTIDE SEQUENCE [LARGE SCALE GENOMIC DNA]</scope>
    <source>
        <strain>X514</strain>
    </source>
</reference>
<feature type="chain" id="PRO_1000124007" description="Pyrrolidone-carboxylate peptidase">
    <location>
        <begin position="1"/>
        <end position="203"/>
    </location>
</feature>
<feature type="active site" evidence="1">
    <location>
        <position position="78"/>
    </location>
</feature>
<feature type="active site" evidence="1">
    <location>
        <position position="141"/>
    </location>
</feature>
<feature type="active site" evidence="1">
    <location>
        <position position="165"/>
    </location>
</feature>
<protein>
    <recommendedName>
        <fullName evidence="1">Pyrrolidone-carboxylate peptidase</fullName>
        <ecNumber evidence="1">3.4.19.3</ecNumber>
    </recommendedName>
    <alternativeName>
        <fullName evidence="1">5-oxoprolyl-peptidase</fullName>
    </alternativeName>
    <alternativeName>
        <fullName evidence="1">Pyroglutamyl-peptidase I</fullName>
        <shortName evidence="1">PGP-I</shortName>
        <shortName evidence="1">Pyrase</shortName>
    </alternativeName>
</protein>
<keyword id="KW-0963">Cytoplasm</keyword>
<keyword id="KW-0378">Hydrolase</keyword>
<keyword id="KW-0645">Protease</keyword>
<keyword id="KW-0788">Thiol protease</keyword>
<proteinExistence type="inferred from homology"/>
<sequence length="203" mass="22357">MKILVTAFDPFGGENINPSYEVLKNLKDNIEGAEIIKIQVPTVFYLSVEKVIEKIKEVKPDAVLSIGQAGGRYDITVERIAINIDDARIPDNIGQQPIDTPIDPEGAPAYFATIPIKEIVEEIKKENIPASISNTAGTFVCNHLMYGILNYVHKNGLNIKAGFIHIPYLPVQVLNKPYTPSMSLGDMVKAIETAIKVIAKKSR</sequence>
<dbReference type="EC" id="3.4.19.3" evidence="1"/>
<dbReference type="EMBL" id="CP000923">
    <property type="protein sequence ID" value="ABY92664.1"/>
    <property type="molecule type" value="Genomic_DNA"/>
</dbReference>
<dbReference type="RefSeq" id="WP_012268696.1">
    <property type="nucleotide sequence ID" value="NC_010320.1"/>
</dbReference>
<dbReference type="SMR" id="B0K0D9"/>
<dbReference type="MEROPS" id="C15.001"/>
<dbReference type="KEGG" id="tex:Teth514_1374"/>
<dbReference type="HOGENOM" id="CLU_043960_4_0_9"/>
<dbReference type="Proteomes" id="UP000002155">
    <property type="component" value="Chromosome"/>
</dbReference>
<dbReference type="GO" id="GO:0005829">
    <property type="term" value="C:cytosol"/>
    <property type="evidence" value="ECO:0007669"/>
    <property type="project" value="InterPro"/>
</dbReference>
<dbReference type="GO" id="GO:0016920">
    <property type="term" value="F:pyroglutamyl-peptidase activity"/>
    <property type="evidence" value="ECO:0007669"/>
    <property type="project" value="UniProtKB-UniRule"/>
</dbReference>
<dbReference type="GO" id="GO:0006508">
    <property type="term" value="P:proteolysis"/>
    <property type="evidence" value="ECO:0007669"/>
    <property type="project" value="UniProtKB-KW"/>
</dbReference>
<dbReference type="CDD" id="cd00501">
    <property type="entry name" value="Peptidase_C15"/>
    <property type="match status" value="1"/>
</dbReference>
<dbReference type="FunFam" id="3.40.630.20:FF:000001">
    <property type="entry name" value="Pyrrolidone-carboxylate peptidase"/>
    <property type="match status" value="1"/>
</dbReference>
<dbReference type="Gene3D" id="3.40.630.20">
    <property type="entry name" value="Peptidase C15, pyroglutamyl peptidase I-like"/>
    <property type="match status" value="1"/>
</dbReference>
<dbReference type="HAMAP" id="MF_00417">
    <property type="entry name" value="Pyrrolid_peptidase"/>
    <property type="match status" value="1"/>
</dbReference>
<dbReference type="InterPro" id="IPR000816">
    <property type="entry name" value="Peptidase_C15"/>
</dbReference>
<dbReference type="InterPro" id="IPR016125">
    <property type="entry name" value="Peptidase_C15-like"/>
</dbReference>
<dbReference type="InterPro" id="IPR036440">
    <property type="entry name" value="Peptidase_C15-like_sf"/>
</dbReference>
<dbReference type="InterPro" id="IPR029762">
    <property type="entry name" value="PGP-I_bact-type"/>
</dbReference>
<dbReference type="InterPro" id="IPR033694">
    <property type="entry name" value="PGPEP1_Cys_AS"/>
</dbReference>
<dbReference type="InterPro" id="IPR033693">
    <property type="entry name" value="PGPEP1_Glu_AS"/>
</dbReference>
<dbReference type="NCBIfam" id="NF009676">
    <property type="entry name" value="PRK13197.1"/>
    <property type="match status" value="1"/>
</dbReference>
<dbReference type="NCBIfam" id="TIGR00504">
    <property type="entry name" value="pyro_pdase"/>
    <property type="match status" value="1"/>
</dbReference>
<dbReference type="PANTHER" id="PTHR23402">
    <property type="entry name" value="PROTEASE FAMILY C15 PYROGLUTAMYL-PEPTIDASE I-RELATED"/>
    <property type="match status" value="1"/>
</dbReference>
<dbReference type="PANTHER" id="PTHR23402:SF1">
    <property type="entry name" value="PYROGLUTAMYL-PEPTIDASE I"/>
    <property type="match status" value="1"/>
</dbReference>
<dbReference type="Pfam" id="PF01470">
    <property type="entry name" value="Peptidase_C15"/>
    <property type="match status" value="1"/>
</dbReference>
<dbReference type="PIRSF" id="PIRSF015592">
    <property type="entry name" value="Prld-crbxl_pptds"/>
    <property type="match status" value="1"/>
</dbReference>
<dbReference type="PRINTS" id="PR00706">
    <property type="entry name" value="PYROGLUPTASE"/>
</dbReference>
<dbReference type="SUPFAM" id="SSF53182">
    <property type="entry name" value="Pyrrolidone carboxyl peptidase (pyroglutamate aminopeptidase)"/>
    <property type="match status" value="1"/>
</dbReference>
<dbReference type="PROSITE" id="PS01334">
    <property type="entry name" value="PYRASE_CYS"/>
    <property type="match status" value="1"/>
</dbReference>
<dbReference type="PROSITE" id="PS01333">
    <property type="entry name" value="PYRASE_GLU"/>
    <property type="match status" value="1"/>
</dbReference>
<organism>
    <name type="scientific">Thermoanaerobacter sp. (strain X514)</name>
    <dbReference type="NCBI Taxonomy" id="399726"/>
    <lineage>
        <taxon>Bacteria</taxon>
        <taxon>Bacillati</taxon>
        <taxon>Bacillota</taxon>
        <taxon>Clostridia</taxon>
        <taxon>Thermoanaerobacterales</taxon>
        <taxon>Thermoanaerobacteraceae</taxon>
        <taxon>Thermoanaerobacter</taxon>
    </lineage>
</organism>